<sequence>MKPAARRRARECAVQALYSWQLSKNDIADVELQFLSEQDVKDVDIAYFRELLSGVAVNAASLDALMAPFLSRQLEELGQVERAVLRIALFELSKRDDVPYKVAINEAIELAKTFGAEDSHKFVNGVLDKVAPTVRKRK</sequence>
<reference key="1">
    <citation type="submission" date="2008-02" db="EMBL/GenBank/DDBJ databases">
        <title>Complete sequence of Yersinia pseudotuberculosis YPIII.</title>
        <authorList>
            <consortium name="US DOE Joint Genome Institute"/>
            <person name="Copeland A."/>
            <person name="Lucas S."/>
            <person name="Lapidus A."/>
            <person name="Glavina del Rio T."/>
            <person name="Dalin E."/>
            <person name="Tice H."/>
            <person name="Bruce D."/>
            <person name="Goodwin L."/>
            <person name="Pitluck S."/>
            <person name="Munk A.C."/>
            <person name="Brettin T."/>
            <person name="Detter J.C."/>
            <person name="Han C."/>
            <person name="Tapia R."/>
            <person name="Schmutz J."/>
            <person name="Larimer F."/>
            <person name="Land M."/>
            <person name="Hauser L."/>
            <person name="Challacombe J.F."/>
            <person name="Green L."/>
            <person name="Lindler L.E."/>
            <person name="Nikolich M.P."/>
            <person name="Richardson P."/>
        </authorList>
    </citation>
    <scope>NUCLEOTIDE SEQUENCE [LARGE SCALE GENOMIC DNA]</scope>
    <source>
        <strain>YPIII</strain>
    </source>
</reference>
<accession>B1JIE1</accession>
<comment type="function">
    <text evidence="1">Involved in transcription antitermination. Required for transcription of ribosomal RNA (rRNA) genes. Binds specifically to the boxA antiterminator sequence of the ribosomal RNA (rrn) operons.</text>
</comment>
<comment type="similarity">
    <text evidence="1">Belongs to the NusB family.</text>
</comment>
<dbReference type="EMBL" id="CP000950">
    <property type="protein sequence ID" value="ACA69525.1"/>
    <property type="molecule type" value="Genomic_DNA"/>
</dbReference>
<dbReference type="RefSeq" id="WP_002208665.1">
    <property type="nucleotide sequence ID" value="NZ_CP009792.1"/>
</dbReference>
<dbReference type="SMR" id="B1JIE1"/>
<dbReference type="GeneID" id="96664444"/>
<dbReference type="KEGG" id="ypy:YPK_3256"/>
<dbReference type="PATRIC" id="fig|502800.11.peg.3985"/>
<dbReference type="GO" id="GO:0005829">
    <property type="term" value="C:cytosol"/>
    <property type="evidence" value="ECO:0007669"/>
    <property type="project" value="TreeGrafter"/>
</dbReference>
<dbReference type="GO" id="GO:0003723">
    <property type="term" value="F:RNA binding"/>
    <property type="evidence" value="ECO:0007669"/>
    <property type="project" value="UniProtKB-UniRule"/>
</dbReference>
<dbReference type="GO" id="GO:0006353">
    <property type="term" value="P:DNA-templated transcription termination"/>
    <property type="evidence" value="ECO:0007669"/>
    <property type="project" value="UniProtKB-UniRule"/>
</dbReference>
<dbReference type="GO" id="GO:0031564">
    <property type="term" value="P:transcription antitermination"/>
    <property type="evidence" value="ECO:0007669"/>
    <property type="project" value="UniProtKB-KW"/>
</dbReference>
<dbReference type="CDD" id="cd00619">
    <property type="entry name" value="Terminator_NusB"/>
    <property type="match status" value="1"/>
</dbReference>
<dbReference type="FunFam" id="1.10.940.10:FF:000001">
    <property type="entry name" value="Transcription antitermination factor NusB"/>
    <property type="match status" value="1"/>
</dbReference>
<dbReference type="Gene3D" id="1.10.940.10">
    <property type="entry name" value="NusB-like"/>
    <property type="match status" value="1"/>
</dbReference>
<dbReference type="HAMAP" id="MF_00073">
    <property type="entry name" value="NusB"/>
    <property type="match status" value="1"/>
</dbReference>
<dbReference type="InterPro" id="IPR035926">
    <property type="entry name" value="NusB-like_sf"/>
</dbReference>
<dbReference type="InterPro" id="IPR011605">
    <property type="entry name" value="NusB_fam"/>
</dbReference>
<dbReference type="InterPro" id="IPR006027">
    <property type="entry name" value="NusB_RsmB_TIM44"/>
</dbReference>
<dbReference type="NCBIfam" id="TIGR01951">
    <property type="entry name" value="nusB"/>
    <property type="match status" value="1"/>
</dbReference>
<dbReference type="PANTHER" id="PTHR11078:SF3">
    <property type="entry name" value="ANTITERMINATION NUSB DOMAIN-CONTAINING PROTEIN"/>
    <property type="match status" value="1"/>
</dbReference>
<dbReference type="PANTHER" id="PTHR11078">
    <property type="entry name" value="N UTILIZATION SUBSTANCE PROTEIN B-RELATED"/>
    <property type="match status" value="1"/>
</dbReference>
<dbReference type="Pfam" id="PF01029">
    <property type="entry name" value="NusB"/>
    <property type="match status" value="1"/>
</dbReference>
<dbReference type="SUPFAM" id="SSF48013">
    <property type="entry name" value="NusB-like"/>
    <property type="match status" value="1"/>
</dbReference>
<proteinExistence type="inferred from homology"/>
<feature type="chain" id="PRO_1000092606" description="Transcription antitermination protein NusB">
    <location>
        <begin position="1"/>
        <end position="138"/>
    </location>
</feature>
<organism>
    <name type="scientific">Yersinia pseudotuberculosis serotype O:3 (strain YPIII)</name>
    <dbReference type="NCBI Taxonomy" id="502800"/>
    <lineage>
        <taxon>Bacteria</taxon>
        <taxon>Pseudomonadati</taxon>
        <taxon>Pseudomonadota</taxon>
        <taxon>Gammaproteobacteria</taxon>
        <taxon>Enterobacterales</taxon>
        <taxon>Yersiniaceae</taxon>
        <taxon>Yersinia</taxon>
    </lineage>
</organism>
<keyword id="KW-0694">RNA-binding</keyword>
<keyword id="KW-0804">Transcription</keyword>
<keyword id="KW-0889">Transcription antitermination</keyword>
<keyword id="KW-0805">Transcription regulation</keyword>
<protein>
    <recommendedName>
        <fullName evidence="1">Transcription antitermination protein NusB</fullName>
    </recommendedName>
    <alternativeName>
        <fullName evidence="1">Antitermination factor NusB</fullName>
    </alternativeName>
</protein>
<name>NUSB_YERPY</name>
<gene>
    <name evidence="1" type="primary">nusB</name>
    <name type="ordered locus">YPK_3256</name>
</gene>
<evidence type="ECO:0000255" key="1">
    <source>
        <dbReference type="HAMAP-Rule" id="MF_00073"/>
    </source>
</evidence>